<dbReference type="EC" id="4.2.1.126" evidence="1"/>
<dbReference type="EMBL" id="CP000393">
    <property type="protein sequence ID" value="ABG49813.1"/>
    <property type="molecule type" value="Genomic_DNA"/>
</dbReference>
<dbReference type="RefSeq" id="WP_011610209.1">
    <property type="nucleotide sequence ID" value="NC_008312.1"/>
</dbReference>
<dbReference type="SMR" id="Q119L1"/>
<dbReference type="STRING" id="203124.Tery_0340"/>
<dbReference type="KEGG" id="ter:Tery_0340"/>
<dbReference type="eggNOG" id="COG2103">
    <property type="taxonomic scope" value="Bacteria"/>
</dbReference>
<dbReference type="HOGENOM" id="CLU_049049_1_1_3"/>
<dbReference type="OrthoDB" id="9813395at2"/>
<dbReference type="UniPathway" id="UPA00342"/>
<dbReference type="GO" id="GO:0097367">
    <property type="term" value="F:carbohydrate derivative binding"/>
    <property type="evidence" value="ECO:0007669"/>
    <property type="project" value="InterPro"/>
</dbReference>
<dbReference type="GO" id="GO:0016835">
    <property type="term" value="F:carbon-oxygen lyase activity"/>
    <property type="evidence" value="ECO:0007669"/>
    <property type="project" value="UniProtKB-UniRule"/>
</dbReference>
<dbReference type="GO" id="GO:0016803">
    <property type="term" value="F:ether hydrolase activity"/>
    <property type="evidence" value="ECO:0007669"/>
    <property type="project" value="TreeGrafter"/>
</dbReference>
<dbReference type="GO" id="GO:0046348">
    <property type="term" value="P:amino sugar catabolic process"/>
    <property type="evidence" value="ECO:0007669"/>
    <property type="project" value="InterPro"/>
</dbReference>
<dbReference type="GO" id="GO:0097173">
    <property type="term" value="P:N-acetylmuramic acid catabolic process"/>
    <property type="evidence" value="ECO:0007669"/>
    <property type="project" value="UniProtKB-UniPathway"/>
</dbReference>
<dbReference type="GO" id="GO:0009254">
    <property type="term" value="P:peptidoglycan turnover"/>
    <property type="evidence" value="ECO:0007669"/>
    <property type="project" value="TreeGrafter"/>
</dbReference>
<dbReference type="CDD" id="cd05007">
    <property type="entry name" value="SIS_Etherase"/>
    <property type="match status" value="1"/>
</dbReference>
<dbReference type="FunFam" id="3.40.50.10490:FF:000014">
    <property type="entry name" value="N-acetylmuramic acid 6-phosphate etherase"/>
    <property type="match status" value="1"/>
</dbReference>
<dbReference type="Gene3D" id="1.10.8.1080">
    <property type="match status" value="1"/>
</dbReference>
<dbReference type="Gene3D" id="3.40.50.10490">
    <property type="entry name" value="Glucose-6-phosphate isomerase like protein, domain 1"/>
    <property type="match status" value="1"/>
</dbReference>
<dbReference type="HAMAP" id="MF_00068">
    <property type="entry name" value="MurQ"/>
    <property type="match status" value="1"/>
</dbReference>
<dbReference type="InterPro" id="IPR005488">
    <property type="entry name" value="Etherase_MurQ"/>
</dbReference>
<dbReference type="InterPro" id="IPR005486">
    <property type="entry name" value="Glucokinase_regulatory_CS"/>
</dbReference>
<dbReference type="InterPro" id="IPR040190">
    <property type="entry name" value="MURQ/GCKR"/>
</dbReference>
<dbReference type="InterPro" id="IPR001347">
    <property type="entry name" value="SIS_dom"/>
</dbReference>
<dbReference type="InterPro" id="IPR046348">
    <property type="entry name" value="SIS_dom_sf"/>
</dbReference>
<dbReference type="NCBIfam" id="TIGR00274">
    <property type="entry name" value="N-acetylmuramic acid 6-phosphate etherase"/>
    <property type="match status" value="1"/>
</dbReference>
<dbReference type="NCBIfam" id="NF003915">
    <property type="entry name" value="PRK05441.1"/>
    <property type="match status" value="1"/>
</dbReference>
<dbReference type="NCBIfam" id="NF009222">
    <property type="entry name" value="PRK12570.1"/>
    <property type="match status" value="1"/>
</dbReference>
<dbReference type="PANTHER" id="PTHR10088">
    <property type="entry name" value="GLUCOKINASE REGULATORY PROTEIN"/>
    <property type="match status" value="1"/>
</dbReference>
<dbReference type="PANTHER" id="PTHR10088:SF4">
    <property type="entry name" value="GLUCOKINASE REGULATORY PROTEIN"/>
    <property type="match status" value="1"/>
</dbReference>
<dbReference type="Pfam" id="PF20741">
    <property type="entry name" value="GKRP-like_C"/>
    <property type="match status" value="1"/>
</dbReference>
<dbReference type="Pfam" id="PF22645">
    <property type="entry name" value="GKRP_SIS_N"/>
    <property type="match status" value="1"/>
</dbReference>
<dbReference type="SUPFAM" id="SSF53697">
    <property type="entry name" value="SIS domain"/>
    <property type="match status" value="1"/>
</dbReference>
<dbReference type="PROSITE" id="PS01272">
    <property type="entry name" value="GCKR"/>
    <property type="match status" value="1"/>
</dbReference>
<dbReference type="PROSITE" id="PS51464">
    <property type="entry name" value="SIS"/>
    <property type="match status" value="1"/>
</dbReference>
<organism>
    <name type="scientific">Trichodesmium erythraeum (strain IMS101)</name>
    <dbReference type="NCBI Taxonomy" id="203124"/>
    <lineage>
        <taxon>Bacteria</taxon>
        <taxon>Bacillati</taxon>
        <taxon>Cyanobacteriota</taxon>
        <taxon>Cyanophyceae</taxon>
        <taxon>Oscillatoriophycideae</taxon>
        <taxon>Oscillatoriales</taxon>
        <taxon>Microcoleaceae</taxon>
        <taxon>Trichodesmium</taxon>
    </lineage>
</organism>
<accession>Q119L1</accession>
<feature type="chain" id="PRO_1000009133" description="N-acetylmuramic acid 6-phosphate etherase">
    <location>
        <begin position="1"/>
        <end position="307"/>
    </location>
</feature>
<feature type="domain" description="SIS" evidence="1">
    <location>
        <begin position="59"/>
        <end position="222"/>
    </location>
</feature>
<feature type="active site" description="Proton donor" evidence="1">
    <location>
        <position position="87"/>
    </location>
</feature>
<feature type="active site" evidence="1">
    <location>
        <position position="118"/>
    </location>
</feature>
<sequence>MKNLQQRGHLLTEQVNPNSHNLDQLSSLELVDLFNQEDKQTLKAIASSRLQLAQAVDMTTKALSQGGKLFYVGAGTSGRLGVLDAAECPPTFCTSPELVQGIIAGGANALLRSSEDLEDSWEDGNEAIASHNITNLDVIVGITAGGTTPYVHGALEGAKQRAAKTIFITCVPVEQFSIKVDVDIRLLVGPELLSGSTRLKAGTVTKMALNILSTGVMVRLGKVYGNRMIDVAIKNSKLRDRALRIIEDLTELSRDEAEELLNKSGDSVKLALLMHWSNLKKEEGDRVLSEYQGNLRAAMKNVSFSTE</sequence>
<protein>
    <recommendedName>
        <fullName evidence="1">N-acetylmuramic acid 6-phosphate etherase</fullName>
        <shortName evidence="1">MurNAc-6-P etherase</shortName>
        <ecNumber evidence="1">4.2.1.126</ecNumber>
    </recommendedName>
    <alternativeName>
        <fullName evidence="1">N-acetylmuramic acid 6-phosphate hydrolase</fullName>
    </alternativeName>
    <alternativeName>
        <fullName evidence="1">N-acetylmuramic acid 6-phosphate lyase</fullName>
    </alternativeName>
</protein>
<proteinExistence type="inferred from homology"/>
<gene>
    <name evidence="1" type="primary">murQ</name>
    <name type="ordered locus">Tery_0340</name>
</gene>
<name>MURQ_TRIEI</name>
<evidence type="ECO:0000255" key="1">
    <source>
        <dbReference type="HAMAP-Rule" id="MF_00068"/>
    </source>
</evidence>
<keyword id="KW-0119">Carbohydrate metabolism</keyword>
<keyword id="KW-0456">Lyase</keyword>
<comment type="function">
    <text evidence="1">Specifically catalyzes the cleavage of the D-lactyl ether substituent of MurNAc 6-phosphate, producing GlcNAc 6-phosphate and D-lactate.</text>
</comment>
<comment type="catalytic activity">
    <reaction evidence="1">
        <text>N-acetyl-D-muramate 6-phosphate + H2O = N-acetyl-D-glucosamine 6-phosphate + (R)-lactate</text>
        <dbReference type="Rhea" id="RHEA:26410"/>
        <dbReference type="ChEBI" id="CHEBI:15377"/>
        <dbReference type="ChEBI" id="CHEBI:16004"/>
        <dbReference type="ChEBI" id="CHEBI:57513"/>
        <dbReference type="ChEBI" id="CHEBI:58722"/>
        <dbReference type="EC" id="4.2.1.126"/>
    </reaction>
</comment>
<comment type="pathway">
    <text evidence="1">Amino-sugar metabolism; N-acetylmuramate degradation.</text>
</comment>
<comment type="subunit">
    <text evidence="1">Homodimer.</text>
</comment>
<comment type="miscellaneous">
    <text evidence="1">A lyase-type mechanism (elimination/hydration) is suggested for the cleavage of the lactyl ether bond of MurNAc 6-phosphate, with the formation of an alpha,beta-unsaturated aldehyde intermediate with (E)-stereochemistry, followed by the syn addition of water to give product.</text>
</comment>
<comment type="similarity">
    <text evidence="1">Belongs to the GCKR-like family. MurNAc-6-P etherase subfamily.</text>
</comment>
<reference key="1">
    <citation type="journal article" date="2015" name="Proc. Natl. Acad. Sci. U.S.A.">
        <title>Trichodesmium genome maintains abundant, widespread noncoding DNA in situ, despite oligotrophic lifestyle.</title>
        <authorList>
            <person name="Walworth N."/>
            <person name="Pfreundt U."/>
            <person name="Nelson W.C."/>
            <person name="Mincer T."/>
            <person name="Heidelberg J.F."/>
            <person name="Fu F."/>
            <person name="Waterbury J.B."/>
            <person name="Glavina del Rio T."/>
            <person name="Goodwin L."/>
            <person name="Kyrpides N.C."/>
            <person name="Land M.L."/>
            <person name="Woyke T."/>
            <person name="Hutchins D.A."/>
            <person name="Hess W.R."/>
            <person name="Webb E.A."/>
        </authorList>
    </citation>
    <scope>NUCLEOTIDE SEQUENCE [LARGE SCALE GENOMIC DNA]</scope>
    <source>
        <strain>IMS101</strain>
    </source>
</reference>